<dbReference type="EMBL" id="M64097">
    <property type="protein sequence ID" value="AAA32393.1"/>
    <property type="molecule type" value="Genomic_DNA"/>
</dbReference>
<dbReference type="EMBL" id="AF083977">
    <property type="protein sequence ID" value="AAF01133.1"/>
    <property type="molecule type" value="Genomic_DNA"/>
</dbReference>
<dbReference type="RefSeq" id="NP_050613.1">
    <property type="nucleotide sequence ID" value="NC_000929.1"/>
</dbReference>
<dbReference type="SMR" id="Q38482"/>
<dbReference type="GeneID" id="2636278"/>
<dbReference type="KEGG" id="vg:2636278"/>
<dbReference type="Proteomes" id="UP000002611">
    <property type="component" value="Genome"/>
</dbReference>
<dbReference type="Proteomes" id="UP000401936">
    <property type="component" value="Segment"/>
</dbReference>
<dbReference type="GO" id="GO:0030430">
    <property type="term" value="C:host cell cytoplasm"/>
    <property type="evidence" value="ECO:0007669"/>
    <property type="project" value="UniProtKB-SubCell"/>
</dbReference>
<organism>
    <name type="scientific">Escherichia phage Mu</name>
    <name type="common">Bacteriophage Mu</name>
    <dbReference type="NCBI Taxonomy" id="2681603"/>
    <lineage>
        <taxon>Viruses</taxon>
        <taxon>Duplodnaviria</taxon>
        <taxon>Heunggongvirae</taxon>
        <taxon>Uroviricota</taxon>
        <taxon>Caudoviricetes</taxon>
        <taxon>Muvirus</taxon>
        <taxon>Muvirus mu</taxon>
    </lineage>
</organism>
<feature type="chain" id="PRO_0000077805" description="Uncharacterized protein gp9">
    <location>
        <begin position="1"/>
        <end position="99"/>
    </location>
</feature>
<feature type="sequence conflict" description="In Ref. 1; AAA32393." evidence="2" ref="1">
    <original>KMT</original>
    <variation>FLR</variation>
    <location>
        <begin position="26"/>
        <end position="28"/>
    </location>
</feature>
<organismHost>
    <name type="scientific">Enterobacteriaceae</name>
    <dbReference type="NCBI Taxonomy" id="543"/>
</organismHost>
<protein>
    <recommendedName>
        <fullName>Uncharacterized protein gp9</fullName>
    </recommendedName>
    <alternativeName>
        <fullName>E8</fullName>
    </alternativeName>
    <alternativeName>
        <fullName>Gene product 9</fullName>
        <shortName>gp9</shortName>
    </alternativeName>
</protein>
<accession>Q38482</accession>
<accession>Q9T1X8</accession>
<comment type="subcellular location">
    <subcellularLocation>
        <location evidence="2">Host cytoplasm</location>
    </subcellularLocation>
</comment>
<comment type="induction">
    <text evidence="1">Expressed in the early phase of the viral replicative cycle. Expression of early genes is repressed by viral Repc (latency) and favored by viral Ner protein.</text>
</comment>
<proteinExistence type="evidence at transcript level"/>
<gene>
    <name type="ordered locus">Mup09</name>
</gene>
<evidence type="ECO:0000269" key="1">
    <source>
    </source>
</evidence>
<evidence type="ECO:0000305" key="2"/>
<reference key="1">
    <citation type="book" date="1987" name="Phage Mu">
        <title>Sequence of the left end of Mu.</title>
        <editorList>
            <person name="Symonds N."/>
            <person name="Toussaint A."/>
            <person name="van de Putte P."/>
            <person name="Howe M.M."/>
        </editorList>
        <authorList>
            <person name="Priess H."/>
            <person name="Brauer B."/>
            <person name="Schmidt C."/>
            <person name="Kamp D."/>
        </authorList>
    </citation>
    <scope>NUCLEOTIDE SEQUENCE [GENOMIC DNA]</scope>
</reference>
<reference key="2">
    <citation type="journal article" date="2002" name="J. Mol. Biol.">
        <title>Bacteriophage Mu genome sequence: analysis and comparison with Mu-like prophages in Haemophilus, Neisseria and Deinococcus.</title>
        <authorList>
            <person name="Morgan G.J."/>
            <person name="Hatfull G.F."/>
            <person name="Casjens S."/>
            <person name="Hendrix R.W."/>
        </authorList>
    </citation>
    <scope>NUCLEOTIDE SEQUENCE [LARGE SCALE GENOMIC DNA]</scope>
</reference>
<reference key="3">
    <citation type="journal article" date="1989" name="J. Bacteriol.">
        <title>Localization and regulation of bacteriophage Mu promoters.</title>
        <authorList>
            <person name="Stoddard S.F."/>
            <person name="Howe M.M."/>
        </authorList>
    </citation>
    <scope>INDUCTION</scope>
</reference>
<name>GP9_BPMU</name>
<keyword id="KW-0244">Early protein</keyword>
<keyword id="KW-1035">Host cytoplasm</keyword>
<keyword id="KW-1185">Reference proteome</keyword>
<sequence>MVTDMKCNRKRWSREDREFIEANVGKMTVEEMAEKLKVATTALRAHARRHGISLCVYRISEHDKYLCRELYKEGLDIHVIARKMELSNRAVSSIVYSGY</sequence>